<protein>
    <recommendedName>
        <fullName evidence="2">Ceramide-binding protein SVF1</fullName>
    </recommendedName>
    <alternativeName>
        <fullName>Survival factor 1</fullName>
    </alternativeName>
</protein>
<keyword id="KW-0963">Cytoplasm</keyword>
<keyword id="KW-0256">Endoplasmic reticulum</keyword>
<keyword id="KW-0333">Golgi apparatus</keyword>
<keyword id="KW-0445">Lipid transport</keyword>
<keyword id="KW-0472">Membrane</keyword>
<keyword id="KW-0539">Nucleus</keyword>
<keyword id="KW-1185">Reference proteome</keyword>
<keyword id="KW-0813">Transport</keyword>
<accession>Q6CQY2</accession>
<dbReference type="EMBL" id="CR382124">
    <property type="protein sequence ID" value="CAH00753.1"/>
    <property type="molecule type" value="Genomic_DNA"/>
</dbReference>
<dbReference type="RefSeq" id="XP_453657.1">
    <property type="nucleotide sequence ID" value="XM_453657.1"/>
</dbReference>
<dbReference type="FunCoup" id="Q6CQY2">
    <property type="interactions" value="127"/>
</dbReference>
<dbReference type="STRING" id="284590.Q6CQY2"/>
<dbReference type="PaxDb" id="284590-Q6CQY2"/>
<dbReference type="KEGG" id="kla:KLLA0_D13332g"/>
<dbReference type="eggNOG" id="ENOG502QQY3">
    <property type="taxonomic scope" value="Eukaryota"/>
</dbReference>
<dbReference type="HOGENOM" id="CLU_030205_3_1_1"/>
<dbReference type="InParanoid" id="Q6CQY2"/>
<dbReference type="OMA" id="AFWPRCV"/>
<dbReference type="Proteomes" id="UP000000598">
    <property type="component" value="Chromosome D"/>
</dbReference>
<dbReference type="GO" id="GO:0033106">
    <property type="term" value="C:cis-Golgi network membrane"/>
    <property type="evidence" value="ECO:0000250"/>
    <property type="project" value="UniProtKB"/>
</dbReference>
<dbReference type="GO" id="GO:0005737">
    <property type="term" value="C:cytoplasm"/>
    <property type="evidence" value="ECO:0000250"/>
    <property type="project" value="UniProtKB"/>
</dbReference>
<dbReference type="GO" id="GO:0005789">
    <property type="term" value="C:endoplasmic reticulum membrane"/>
    <property type="evidence" value="ECO:0007669"/>
    <property type="project" value="UniProtKB-SubCell"/>
</dbReference>
<dbReference type="GO" id="GO:0005634">
    <property type="term" value="C:nucleus"/>
    <property type="evidence" value="ECO:0007669"/>
    <property type="project" value="UniProtKB-SubCell"/>
</dbReference>
<dbReference type="GO" id="GO:0097001">
    <property type="term" value="F:ceramide binding"/>
    <property type="evidence" value="ECO:0000250"/>
    <property type="project" value="UniProtKB"/>
</dbReference>
<dbReference type="GO" id="GO:0035621">
    <property type="term" value="P:ER to Golgi ceramide transport"/>
    <property type="evidence" value="ECO:0000250"/>
    <property type="project" value="UniProtKB"/>
</dbReference>
<dbReference type="GO" id="GO:0006979">
    <property type="term" value="P:response to oxidative stress"/>
    <property type="evidence" value="ECO:0007669"/>
    <property type="project" value="InterPro"/>
</dbReference>
<dbReference type="InterPro" id="IPR051385">
    <property type="entry name" value="Ceramide-binding_SVF1"/>
</dbReference>
<dbReference type="InterPro" id="IPR033394">
    <property type="entry name" value="Svf1-like_C"/>
</dbReference>
<dbReference type="InterPro" id="IPR013931">
    <property type="entry name" value="Svf1-like_N"/>
</dbReference>
<dbReference type="PANTHER" id="PTHR47107:SF1">
    <property type="entry name" value="CERAMIDE-BINDING PROTEIN SVF1-RELATED"/>
    <property type="match status" value="1"/>
</dbReference>
<dbReference type="PANTHER" id="PTHR47107">
    <property type="entry name" value="SVF1-LIKE PROTEIN YDR222W-RELATED"/>
    <property type="match status" value="1"/>
</dbReference>
<dbReference type="Pfam" id="PF08622">
    <property type="entry name" value="Svf1"/>
    <property type="match status" value="1"/>
</dbReference>
<dbReference type="Pfam" id="PF17187">
    <property type="entry name" value="Svf1_C"/>
    <property type="match status" value="1"/>
</dbReference>
<dbReference type="SUPFAM" id="SSF159245">
    <property type="entry name" value="AttH-like"/>
    <property type="match status" value="1"/>
</dbReference>
<organism>
    <name type="scientific">Kluyveromyces lactis (strain ATCC 8585 / CBS 2359 / DSM 70799 / NBRC 1267 / NRRL Y-1140 / WM37)</name>
    <name type="common">Yeast</name>
    <name type="synonym">Candida sphaerica</name>
    <dbReference type="NCBI Taxonomy" id="284590"/>
    <lineage>
        <taxon>Eukaryota</taxon>
        <taxon>Fungi</taxon>
        <taxon>Dikarya</taxon>
        <taxon>Ascomycota</taxon>
        <taxon>Saccharomycotina</taxon>
        <taxon>Saccharomycetes</taxon>
        <taxon>Saccharomycetales</taxon>
        <taxon>Saccharomycetaceae</taxon>
        <taxon>Kluyveromyces</taxon>
    </lineage>
</organism>
<comment type="function">
    <text evidence="1">Ceramide-binding protein that may transfer ceramides from the endoplasmic reticulum membrane to the cis-Golgi network membrane, and is thereby required for the biosynthesis of complex sphingolipids.</text>
</comment>
<comment type="subcellular location">
    <subcellularLocation>
        <location evidence="1">Golgi apparatus</location>
        <location evidence="1">cis-Golgi network membrane</location>
        <topology evidence="1">Peripheral membrane protein</topology>
    </subcellularLocation>
    <subcellularLocation>
        <location evidence="1">Endoplasmic reticulum membrane</location>
        <topology evidence="1">Peripheral membrane protein</topology>
    </subcellularLocation>
    <subcellularLocation>
        <location evidence="1">Cytoplasm</location>
    </subcellularLocation>
    <subcellularLocation>
        <location evidence="1">Nucleus</location>
    </subcellularLocation>
    <text evidence="1">Localizes to the interface between the cis-Golgi network and endoplasmic reticulum exit sites.</text>
</comment>
<comment type="similarity">
    <text evidence="2">Belongs to the SVF1 family.</text>
</comment>
<feature type="chain" id="PRO_0000072332" description="Ceramide-binding protein SVF1">
    <location>
        <begin position="1"/>
        <end position="403"/>
    </location>
</feature>
<feature type="region of interest" description="Peripherally associates with membranes" evidence="1">
    <location>
        <begin position="1"/>
        <end position="18"/>
    </location>
</feature>
<name>SVF1_KLULA</name>
<sequence length="403" mass="45864">MLKWIQGGISAVTGIAEPEYGQEYIHPCTERVKGKQPFHVTSTKDFEWRNPDYTNVETSTFYFTDLETGYTGFAQVIHSNIIGLHTTAQFTFRIYHKENTDDQIWTSVKLENFRIEGTNFYADNLSIVMNEEGTEVQFKSTVDENVEVDFTIRRAVDGVKVGEDPSTYYGDDVTQPWGSMRHVFWPRNHISGKIAAKNEETNVKIDLQFSEEKKHYSMFVFAMQGMKPHHAAKSWTFLNFQSEDYTAVLMEFTTPKSYANTTVNIGIVCDTKNILSVTVDNDAEYIDPEVDSVGWPVPKEISVSFNGINADIKDDDVESADPFNTIVKGKLDNLVERVDVMAEIPTFVKNIVSGVAGTKPYIYQFFDDFELTIKDQESKGFGWCEITFISESSEVEESAYDEN</sequence>
<reference key="1">
    <citation type="journal article" date="2004" name="Nature">
        <title>Genome evolution in yeasts.</title>
        <authorList>
            <person name="Dujon B."/>
            <person name="Sherman D."/>
            <person name="Fischer G."/>
            <person name="Durrens P."/>
            <person name="Casaregola S."/>
            <person name="Lafontaine I."/>
            <person name="de Montigny J."/>
            <person name="Marck C."/>
            <person name="Neuveglise C."/>
            <person name="Talla E."/>
            <person name="Goffard N."/>
            <person name="Frangeul L."/>
            <person name="Aigle M."/>
            <person name="Anthouard V."/>
            <person name="Babour A."/>
            <person name="Barbe V."/>
            <person name="Barnay S."/>
            <person name="Blanchin S."/>
            <person name="Beckerich J.-M."/>
            <person name="Beyne E."/>
            <person name="Bleykasten C."/>
            <person name="Boisrame A."/>
            <person name="Boyer J."/>
            <person name="Cattolico L."/>
            <person name="Confanioleri F."/>
            <person name="de Daruvar A."/>
            <person name="Despons L."/>
            <person name="Fabre E."/>
            <person name="Fairhead C."/>
            <person name="Ferry-Dumazet H."/>
            <person name="Groppi A."/>
            <person name="Hantraye F."/>
            <person name="Hennequin C."/>
            <person name="Jauniaux N."/>
            <person name="Joyet P."/>
            <person name="Kachouri R."/>
            <person name="Kerrest A."/>
            <person name="Koszul R."/>
            <person name="Lemaire M."/>
            <person name="Lesur I."/>
            <person name="Ma L."/>
            <person name="Muller H."/>
            <person name="Nicaud J.-M."/>
            <person name="Nikolski M."/>
            <person name="Oztas S."/>
            <person name="Ozier-Kalogeropoulos O."/>
            <person name="Pellenz S."/>
            <person name="Potier S."/>
            <person name="Richard G.-F."/>
            <person name="Straub M.-L."/>
            <person name="Suleau A."/>
            <person name="Swennen D."/>
            <person name="Tekaia F."/>
            <person name="Wesolowski-Louvel M."/>
            <person name="Westhof E."/>
            <person name="Wirth B."/>
            <person name="Zeniou-Meyer M."/>
            <person name="Zivanovic Y."/>
            <person name="Bolotin-Fukuhara M."/>
            <person name="Thierry A."/>
            <person name="Bouchier C."/>
            <person name="Caudron B."/>
            <person name="Scarpelli C."/>
            <person name="Gaillardin C."/>
            <person name="Weissenbach J."/>
            <person name="Wincker P."/>
            <person name="Souciet J.-L."/>
        </authorList>
    </citation>
    <scope>NUCLEOTIDE SEQUENCE [LARGE SCALE GENOMIC DNA]</scope>
    <source>
        <strain>ATCC 8585 / CBS 2359 / DSM 70799 / NBRC 1267 / NRRL Y-1140 / WM37</strain>
    </source>
</reference>
<proteinExistence type="inferred from homology"/>
<evidence type="ECO:0000250" key="1">
    <source>
        <dbReference type="UniProtKB" id="Q05515"/>
    </source>
</evidence>
<evidence type="ECO:0000305" key="2"/>
<gene>
    <name type="primary">SVF1</name>
    <name type="ordered locus">KLLA0D13332g</name>
</gene>